<accession>Q8DUW1</accession>
<comment type="function">
    <text evidence="1">Catalyzes the anti-1,4-elimination of the C-3 phosphate and the C-6 proR hydrogen from 5-enolpyruvylshikimate-3-phosphate (EPSP) to yield chorismate, which is the branch point compound that serves as the starting substrate for the three terminal pathways of aromatic amino acid biosynthesis. This reaction introduces a second double bond into the aromatic ring system.</text>
</comment>
<comment type="catalytic activity">
    <reaction evidence="1">
        <text>5-O-(1-carboxyvinyl)-3-phosphoshikimate = chorismate + phosphate</text>
        <dbReference type="Rhea" id="RHEA:21020"/>
        <dbReference type="ChEBI" id="CHEBI:29748"/>
        <dbReference type="ChEBI" id="CHEBI:43474"/>
        <dbReference type="ChEBI" id="CHEBI:57701"/>
        <dbReference type="EC" id="4.2.3.5"/>
    </reaction>
</comment>
<comment type="cofactor">
    <cofactor evidence="1">
        <name>FMNH2</name>
        <dbReference type="ChEBI" id="CHEBI:57618"/>
    </cofactor>
    <text evidence="1">Reduced FMN (FMNH(2)).</text>
</comment>
<comment type="pathway">
    <text evidence="1">Metabolic intermediate biosynthesis; chorismate biosynthesis; chorismate from D-erythrose 4-phosphate and phosphoenolpyruvate: step 7/7.</text>
</comment>
<comment type="subunit">
    <text evidence="1">Homotetramer.</text>
</comment>
<comment type="similarity">
    <text evidence="1">Belongs to the chorismate synthase family.</text>
</comment>
<organism>
    <name type="scientific">Streptococcus mutans serotype c (strain ATCC 700610 / UA159)</name>
    <dbReference type="NCBI Taxonomy" id="210007"/>
    <lineage>
        <taxon>Bacteria</taxon>
        <taxon>Bacillati</taxon>
        <taxon>Bacillota</taxon>
        <taxon>Bacilli</taxon>
        <taxon>Lactobacillales</taxon>
        <taxon>Streptococcaceae</taxon>
        <taxon>Streptococcus</taxon>
    </lineage>
</organism>
<sequence>MRYFTAGESHGPRLTAIIEGVPAGLPLTADYINAELRRRQGGYGRGGRMKIESDQVEITSGVRHGLTMGSPITLNVTNRDFKNWTEIMSAADIEDKKKSIRKLTKPRPGHADLVGGMKYRFSDLRNSLERSSARETTMRVAVGSVAKRLLEELEITIASHVVVLGGIEVDVPENLTVAEIKERASQSEISVVNQEHEQEIKDYIDQIKKEGNTIGGIIETVVGGVPVGLGSYVQWDRKLDAQIAQGVVSINAFKGVEFGLGFKDGYLKGSYVMDEITWSKEDGYRRKSNNLGGFEGGMTNGQPIVVRGVMKPIPTLYKPLMSVDIETHEPYKASVERSDPTAVPAAAVVMEGVVATVLATEILNKFSSDNMEELKEAVKSHQKFIKEF</sequence>
<name>AROC_STRMU</name>
<keyword id="KW-0028">Amino-acid biosynthesis</keyword>
<keyword id="KW-0057">Aromatic amino acid biosynthesis</keyword>
<keyword id="KW-0274">FAD</keyword>
<keyword id="KW-0285">Flavoprotein</keyword>
<keyword id="KW-0288">FMN</keyword>
<keyword id="KW-0456">Lyase</keyword>
<keyword id="KW-0521">NADP</keyword>
<keyword id="KW-1185">Reference proteome</keyword>
<protein>
    <recommendedName>
        <fullName evidence="1">Chorismate synthase</fullName>
        <shortName evidence="1">CS</shortName>
        <ecNumber evidence="1">4.2.3.5</ecNumber>
    </recommendedName>
    <alternativeName>
        <fullName evidence="1">5-enolpyruvylshikimate-3-phosphate phospholyase</fullName>
    </alternativeName>
</protein>
<feature type="chain" id="PRO_0000140654" description="Chorismate synthase">
    <location>
        <begin position="1"/>
        <end position="388"/>
    </location>
</feature>
<feature type="binding site" evidence="1">
    <location>
        <position position="39"/>
    </location>
    <ligand>
        <name>NADP(+)</name>
        <dbReference type="ChEBI" id="CHEBI:58349"/>
    </ligand>
</feature>
<feature type="binding site" evidence="1">
    <location>
        <position position="45"/>
    </location>
    <ligand>
        <name>NADP(+)</name>
        <dbReference type="ChEBI" id="CHEBI:58349"/>
    </ligand>
</feature>
<feature type="binding site" evidence="1">
    <location>
        <begin position="130"/>
        <end position="132"/>
    </location>
    <ligand>
        <name>FMN</name>
        <dbReference type="ChEBI" id="CHEBI:58210"/>
    </ligand>
</feature>
<feature type="binding site" evidence="1">
    <location>
        <begin position="251"/>
        <end position="252"/>
    </location>
    <ligand>
        <name>FMN</name>
        <dbReference type="ChEBI" id="CHEBI:58210"/>
    </ligand>
</feature>
<feature type="binding site" evidence="1">
    <location>
        <position position="296"/>
    </location>
    <ligand>
        <name>FMN</name>
        <dbReference type="ChEBI" id="CHEBI:58210"/>
    </ligand>
</feature>
<feature type="binding site" evidence="1">
    <location>
        <begin position="311"/>
        <end position="315"/>
    </location>
    <ligand>
        <name>FMN</name>
        <dbReference type="ChEBI" id="CHEBI:58210"/>
    </ligand>
</feature>
<feature type="binding site" evidence="1">
    <location>
        <position position="337"/>
    </location>
    <ligand>
        <name>FMN</name>
        <dbReference type="ChEBI" id="CHEBI:58210"/>
    </ligand>
</feature>
<dbReference type="EC" id="4.2.3.5" evidence="1"/>
<dbReference type="EMBL" id="AE014133">
    <property type="protein sequence ID" value="AAN58500.1"/>
    <property type="molecule type" value="Genomic_DNA"/>
</dbReference>
<dbReference type="RefSeq" id="NP_721194.1">
    <property type="nucleotide sequence ID" value="NC_004350.2"/>
</dbReference>
<dbReference type="RefSeq" id="WP_002261934.1">
    <property type="nucleotide sequence ID" value="NC_004350.2"/>
</dbReference>
<dbReference type="SMR" id="Q8DUW1"/>
<dbReference type="STRING" id="210007.SMU_780"/>
<dbReference type="KEGG" id="smu:SMU_780"/>
<dbReference type="PATRIC" id="fig|210007.7.peg.691"/>
<dbReference type="eggNOG" id="COG0082">
    <property type="taxonomic scope" value="Bacteria"/>
</dbReference>
<dbReference type="HOGENOM" id="CLU_034547_2_0_9"/>
<dbReference type="OrthoDB" id="9771806at2"/>
<dbReference type="PhylomeDB" id="Q8DUW1"/>
<dbReference type="UniPathway" id="UPA00053">
    <property type="reaction ID" value="UER00090"/>
</dbReference>
<dbReference type="Proteomes" id="UP000002512">
    <property type="component" value="Chromosome"/>
</dbReference>
<dbReference type="GO" id="GO:0005829">
    <property type="term" value="C:cytosol"/>
    <property type="evidence" value="ECO:0007669"/>
    <property type="project" value="TreeGrafter"/>
</dbReference>
<dbReference type="GO" id="GO:0004107">
    <property type="term" value="F:chorismate synthase activity"/>
    <property type="evidence" value="ECO:0007669"/>
    <property type="project" value="UniProtKB-UniRule"/>
</dbReference>
<dbReference type="GO" id="GO:0010181">
    <property type="term" value="F:FMN binding"/>
    <property type="evidence" value="ECO:0007669"/>
    <property type="project" value="TreeGrafter"/>
</dbReference>
<dbReference type="GO" id="GO:0008652">
    <property type="term" value="P:amino acid biosynthetic process"/>
    <property type="evidence" value="ECO:0007669"/>
    <property type="project" value="UniProtKB-KW"/>
</dbReference>
<dbReference type="GO" id="GO:0009073">
    <property type="term" value="P:aromatic amino acid family biosynthetic process"/>
    <property type="evidence" value="ECO:0007669"/>
    <property type="project" value="UniProtKB-KW"/>
</dbReference>
<dbReference type="GO" id="GO:0009423">
    <property type="term" value="P:chorismate biosynthetic process"/>
    <property type="evidence" value="ECO:0007669"/>
    <property type="project" value="UniProtKB-UniRule"/>
</dbReference>
<dbReference type="CDD" id="cd07304">
    <property type="entry name" value="Chorismate_synthase"/>
    <property type="match status" value="1"/>
</dbReference>
<dbReference type="FunFam" id="3.60.150.10:FF:000002">
    <property type="entry name" value="Chorismate synthase"/>
    <property type="match status" value="1"/>
</dbReference>
<dbReference type="Gene3D" id="3.60.150.10">
    <property type="entry name" value="Chorismate synthase AroC"/>
    <property type="match status" value="1"/>
</dbReference>
<dbReference type="HAMAP" id="MF_00300">
    <property type="entry name" value="Chorismate_synth"/>
    <property type="match status" value="1"/>
</dbReference>
<dbReference type="InterPro" id="IPR000453">
    <property type="entry name" value="Chorismate_synth"/>
</dbReference>
<dbReference type="InterPro" id="IPR035904">
    <property type="entry name" value="Chorismate_synth_AroC_sf"/>
</dbReference>
<dbReference type="InterPro" id="IPR020541">
    <property type="entry name" value="Chorismate_synthase_CS"/>
</dbReference>
<dbReference type="NCBIfam" id="TIGR00033">
    <property type="entry name" value="aroC"/>
    <property type="match status" value="1"/>
</dbReference>
<dbReference type="NCBIfam" id="NF003793">
    <property type="entry name" value="PRK05382.1"/>
    <property type="match status" value="1"/>
</dbReference>
<dbReference type="PANTHER" id="PTHR21085">
    <property type="entry name" value="CHORISMATE SYNTHASE"/>
    <property type="match status" value="1"/>
</dbReference>
<dbReference type="PANTHER" id="PTHR21085:SF0">
    <property type="entry name" value="CHORISMATE SYNTHASE"/>
    <property type="match status" value="1"/>
</dbReference>
<dbReference type="Pfam" id="PF01264">
    <property type="entry name" value="Chorismate_synt"/>
    <property type="match status" value="1"/>
</dbReference>
<dbReference type="PIRSF" id="PIRSF001456">
    <property type="entry name" value="Chorismate_synth"/>
    <property type="match status" value="1"/>
</dbReference>
<dbReference type="SUPFAM" id="SSF103263">
    <property type="entry name" value="Chorismate synthase, AroC"/>
    <property type="match status" value="1"/>
</dbReference>
<dbReference type="PROSITE" id="PS00787">
    <property type="entry name" value="CHORISMATE_SYNTHASE_1"/>
    <property type="match status" value="1"/>
</dbReference>
<dbReference type="PROSITE" id="PS00788">
    <property type="entry name" value="CHORISMATE_SYNTHASE_2"/>
    <property type="match status" value="1"/>
</dbReference>
<dbReference type="PROSITE" id="PS00789">
    <property type="entry name" value="CHORISMATE_SYNTHASE_3"/>
    <property type="match status" value="1"/>
</dbReference>
<evidence type="ECO:0000255" key="1">
    <source>
        <dbReference type="HAMAP-Rule" id="MF_00300"/>
    </source>
</evidence>
<gene>
    <name evidence="1" type="primary">aroC</name>
    <name type="ordered locus">SMU_780</name>
</gene>
<reference key="1">
    <citation type="journal article" date="2002" name="Proc. Natl. Acad. Sci. U.S.A.">
        <title>Genome sequence of Streptococcus mutans UA159, a cariogenic dental pathogen.</title>
        <authorList>
            <person name="Ajdic D.J."/>
            <person name="McShan W.M."/>
            <person name="McLaughlin R.E."/>
            <person name="Savic G."/>
            <person name="Chang J."/>
            <person name="Carson M.B."/>
            <person name="Primeaux C."/>
            <person name="Tian R."/>
            <person name="Kenton S."/>
            <person name="Jia H.G."/>
            <person name="Lin S.P."/>
            <person name="Qian Y."/>
            <person name="Li S."/>
            <person name="Zhu H."/>
            <person name="Najar F.Z."/>
            <person name="Lai H."/>
            <person name="White J."/>
            <person name="Roe B.A."/>
            <person name="Ferretti J.J."/>
        </authorList>
    </citation>
    <scope>NUCLEOTIDE SEQUENCE [LARGE SCALE GENOMIC DNA]</scope>
    <source>
        <strain>ATCC 700610 / UA159</strain>
    </source>
</reference>
<proteinExistence type="inferred from homology"/>